<keyword id="KW-1185">Reference proteome</keyword>
<keyword id="KW-0833">Ubl conjugation pathway</keyword>
<sequence>MAVCAGIKVPRNFRLLEELEEGQKGVGDGTVSWGLEDDEDMTLTRWTGMIIGPPRTNYENRIYSLRLECGPKYPEAPPTVRFVTKMNMNGINNSNGTVDYRSIPVLAKWQNSFSIKVLLQELRRLMMSKENMKLPQPPEGQTYNN</sequence>
<name>UB2V2_XENLA</name>
<dbReference type="EMBL" id="BC042361">
    <property type="protein sequence ID" value="AAH42361.1"/>
    <property type="molecule type" value="mRNA"/>
</dbReference>
<dbReference type="EMBL" id="BC106303">
    <property type="protein sequence ID" value="AAI06304.1"/>
    <property type="molecule type" value="mRNA"/>
</dbReference>
<dbReference type="RefSeq" id="NP_001080397.1">
    <property type="nucleotide sequence ID" value="NM_001086928.1"/>
</dbReference>
<dbReference type="SMR" id="Q7ZYP0"/>
<dbReference type="DNASU" id="380089"/>
<dbReference type="GeneID" id="380089"/>
<dbReference type="KEGG" id="xla:380089"/>
<dbReference type="AGR" id="Xenbase:XB-GENE-1015108"/>
<dbReference type="CTD" id="380089"/>
<dbReference type="Xenbase" id="XB-GENE-1015108">
    <property type="gene designation" value="ube2v2.S"/>
</dbReference>
<dbReference type="OMA" id="PHVNDRD"/>
<dbReference type="OrthoDB" id="6508832at2759"/>
<dbReference type="Proteomes" id="UP000186698">
    <property type="component" value="Chromosome 6S"/>
</dbReference>
<dbReference type="Bgee" id="380089">
    <property type="expression patterns" value="Expressed in brain and 19 other cell types or tissues"/>
</dbReference>
<dbReference type="CDD" id="cd23807">
    <property type="entry name" value="UEV_UBE2V"/>
    <property type="match status" value="1"/>
</dbReference>
<dbReference type="FunFam" id="3.10.110.10:FF:000012">
    <property type="entry name" value="Ubiquitin-conjugating enzyme E2 variant 2"/>
    <property type="match status" value="1"/>
</dbReference>
<dbReference type="Gene3D" id="3.10.110.10">
    <property type="entry name" value="Ubiquitin Conjugating Enzyme"/>
    <property type="match status" value="1"/>
</dbReference>
<dbReference type="InterPro" id="IPR000608">
    <property type="entry name" value="UBQ-conjugat_E2_core"/>
</dbReference>
<dbReference type="InterPro" id="IPR016135">
    <property type="entry name" value="UBQ-conjugating_enzyme/RWD"/>
</dbReference>
<dbReference type="PANTHER" id="PTHR24068">
    <property type="entry name" value="UBIQUITIN-CONJUGATING ENZYME E2"/>
    <property type="match status" value="1"/>
</dbReference>
<dbReference type="Pfam" id="PF00179">
    <property type="entry name" value="UQ_con"/>
    <property type="match status" value="1"/>
</dbReference>
<dbReference type="SMART" id="SM00212">
    <property type="entry name" value="UBCc"/>
    <property type="match status" value="1"/>
</dbReference>
<dbReference type="SUPFAM" id="SSF54495">
    <property type="entry name" value="UBC-like"/>
    <property type="match status" value="1"/>
</dbReference>
<dbReference type="PROSITE" id="PS50127">
    <property type="entry name" value="UBC_2"/>
    <property type="match status" value="1"/>
</dbReference>
<protein>
    <recommendedName>
        <fullName>Ubiquitin-conjugating enzyme E2 variant 2</fullName>
    </recommendedName>
</protein>
<organism>
    <name type="scientific">Xenopus laevis</name>
    <name type="common">African clawed frog</name>
    <dbReference type="NCBI Taxonomy" id="8355"/>
    <lineage>
        <taxon>Eukaryota</taxon>
        <taxon>Metazoa</taxon>
        <taxon>Chordata</taxon>
        <taxon>Craniata</taxon>
        <taxon>Vertebrata</taxon>
        <taxon>Euteleostomi</taxon>
        <taxon>Amphibia</taxon>
        <taxon>Batrachia</taxon>
        <taxon>Anura</taxon>
        <taxon>Pipoidea</taxon>
        <taxon>Pipidae</taxon>
        <taxon>Xenopodinae</taxon>
        <taxon>Xenopus</taxon>
        <taxon>Xenopus</taxon>
    </lineage>
</organism>
<reference key="1">
    <citation type="submission" date="2003-01" db="EMBL/GenBank/DDBJ databases">
        <authorList>
            <consortium name="NIH - Xenopus Gene Collection (XGC) project"/>
        </authorList>
    </citation>
    <scope>NUCLEOTIDE SEQUENCE [LARGE SCALE MRNA]</scope>
    <source>
        <tissue>Embryo</tissue>
    </source>
</reference>
<proteinExistence type="evidence at transcript level"/>
<comment type="function">
    <text evidence="1">Has no ubiquitin ligase activity on its own. The ube2v2/ube2n heterodimer catalyzes the synthesis of non-canonical poly-ubiquitin chains that are linked through 'Lys-63'. This type of poly-ubiquitination does not lead to protein degradation by the proteasome. Mediates transcriptional activation of target genes. Plays a role in the control of progress through the cell cycle and differentiation. Plays a role in the error-free DNA repair pathway and contributes to the survival of cells after DNA damage (By similarity).</text>
</comment>
<comment type="subunit">
    <text evidence="1">Heterodimer with ube2n.</text>
</comment>
<comment type="similarity">
    <text evidence="2">Belongs to the ubiquitin-conjugating enzyme family.</text>
</comment>
<gene>
    <name type="primary">ube2v2</name>
</gene>
<accession>Q7ZYP0</accession>
<evidence type="ECO:0000250" key="1"/>
<evidence type="ECO:0000255" key="2">
    <source>
        <dbReference type="PROSITE-ProRule" id="PRU00388"/>
    </source>
</evidence>
<feature type="chain" id="PRO_0000292588" description="Ubiquitin-conjugating enzyme E2 variant 2">
    <location>
        <begin position="1"/>
        <end position="145"/>
    </location>
</feature>
<feature type="domain" description="UBC core" evidence="2">
    <location>
        <begin position="10"/>
        <end position="145"/>
    </location>
</feature>